<gene>
    <name evidence="1" type="primary">rplY</name>
    <name evidence="1" type="synonym">ctc</name>
    <name type="ordered locus">RT0594</name>
</gene>
<protein>
    <recommendedName>
        <fullName evidence="1">Large ribosomal subunit protein bL25</fullName>
    </recommendedName>
    <alternativeName>
        <fullName evidence="2">50S ribosomal protein L25</fullName>
    </alternativeName>
    <alternativeName>
        <fullName evidence="1">General stress protein CTC</fullName>
    </alternativeName>
</protein>
<name>RL25_RICTY</name>
<accession>Q68WD3</accession>
<organism>
    <name type="scientific">Rickettsia typhi (strain ATCC VR-144 / Wilmington)</name>
    <dbReference type="NCBI Taxonomy" id="257363"/>
    <lineage>
        <taxon>Bacteria</taxon>
        <taxon>Pseudomonadati</taxon>
        <taxon>Pseudomonadota</taxon>
        <taxon>Alphaproteobacteria</taxon>
        <taxon>Rickettsiales</taxon>
        <taxon>Rickettsiaceae</taxon>
        <taxon>Rickettsieae</taxon>
        <taxon>Rickettsia</taxon>
        <taxon>typhus group</taxon>
    </lineage>
</organism>
<evidence type="ECO:0000255" key="1">
    <source>
        <dbReference type="HAMAP-Rule" id="MF_01334"/>
    </source>
</evidence>
<evidence type="ECO:0000305" key="2"/>
<proteinExistence type="inferred from homology"/>
<dbReference type="EMBL" id="AE017197">
    <property type="protein sequence ID" value="AAU04059.1"/>
    <property type="molecule type" value="Genomic_DNA"/>
</dbReference>
<dbReference type="RefSeq" id="WP_011191040.1">
    <property type="nucleotide sequence ID" value="NC_006142.1"/>
</dbReference>
<dbReference type="SMR" id="Q68WD3"/>
<dbReference type="KEGG" id="rty:RT0594"/>
<dbReference type="eggNOG" id="COG1825">
    <property type="taxonomic scope" value="Bacteria"/>
</dbReference>
<dbReference type="HOGENOM" id="CLU_075939_0_0_5"/>
<dbReference type="OrthoDB" id="9806411at2"/>
<dbReference type="Proteomes" id="UP000000604">
    <property type="component" value="Chromosome"/>
</dbReference>
<dbReference type="GO" id="GO:0022625">
    <property type="term" value="C:cytosolic large ribosomal subunit"/>
    <property type="evidence" value="ECO:0007669"/>
    <property type="project" value="TreeGrafter"/>
</dbReference>
<dbReference type="GO" id="GO:0008097">
    <property type="term" value="F:5S rRNA binding"/>
    <property type="evidence" value="ECO:0007669"/>
    <property type="project" value="InterPro"/>
</dbReference>
<dbReference type="GO" id="GO:0003735">
    <property type="term" value="F:structural constituent of ribosome"/>
    <property type="evidence" value="ECO:0007669"/>
    <property type="project" value="InterPro"/>
</dbReference>
<dbReference type="GO" id="GO:0006412">
    <property type="term" value="P:translation"/>
    <property type="evidence" value="ECO:0007669"/>
    <property type="project" value="UniProtKB-UniRule"/>
</dbReference>
<dbReference type="CDD" id="cd00495">
    <property type="entry name" value="Ribosomal_L25_TL5_CTC"/>
    <property type="match status" value="1"/>
</dbReference>
<dbReference type="Gene3D" id="2.170.120.20">
    <property type="entry name" value="Ribosomal protein L25, beta domain"/>
    <property type="match status" value="1"/>
</dbReference>
<dbReference type="Gene3D" id="2.40.240.10">
    <property type="entry name" value="Ribosomal Protein L25, Chain P"/>
    <property type="match status" value="1"/>
</dbReference>
<dbReference type="HAMAP" id="MF_01336">
    <property type="entry name" value="Ribosomal_bL25"/>
    <property type="match status" value="1"/>
</dbReference>
<dbReference type="HAMAP" id="MF_01334">
    <property type="entry name" value="Ribosomal_bL25_CTC"/>
    <property type="match status" value="1"/>
</dbReference>
<dbReference type="InterPro" id="IPR020056">
    <property type="entry name" value="Rbsml_bL25/Gln-tRNA_synth_N"/>
</dbReference>
<dbReference type="InterPro" id="IPR011035">
    <property type="entry name" value="Ribosomal_bL25/Gln-tRNA_synth"/>
</dbReference>
<dbReference type="InterPro" id="IPR020057">
    <property type="entry name" value="Ribosomal_bL25_b-dom"/>
</dbReference>
<dbReference type="InterPro" id="IPR037121">
    <property type="entry name" value="Ribosomal_bL25_C"/>
</dbReference>
<dbReference type="InterPro" id="IPR001021">
    <property type="entry name" value="Ribosomal_bL25_long"/>
</dbReference>
<dbReference type="InterPro" id="IPR020055">
    <property type="entry name" value="Ribosomal_bL25_short"/>
</dbReference>
<dbReference type="InterPro" id="IPR029751">
    <property type="entry name" value="Ribosomal_L25_dom"/>
</dbReference>
<dbReference type="InterPro" id="IPR020930">
    <property type="entry name" value="Ribosomal_uL5_bac-type"/>
</dbReference>
<dbReference type="NCBIfam" id="TIGR00731">
    <property type="entry name" value="bL25_bact_ctc"/>
    <property type="match status" value="1"/>
</dbReference>
<dbReference type="NCBIfam" id="NF004128">
    <property type="entry name" value="PRK05618.1-2"/>
    <property type="match status" value="1"/>
</dbReference>
<dbReference type="NCBIfam" id="NF004612">
    <property type="entry name" value="PRK05943.1"/>
    <property type="match status" value="1"/>
</dbReference>
<dbReference type="PANTHER" id="PTHR33284">
    <property type="entry name" value="RIBOSOMAL PROTEIN L25/GLN-TRNA SYNTHETASE, ANTI-CODON-BINDING DOMAIN-CONTAINING PROTEIN"/>
    <property type="match status" value="1"/>
</dbReference>
<dbReference type="PANTHER" id="PTHR33284:SF1">
    <property type="entry name" value="RIBOSOMAL PROTEIN L25_GLN-TRNA SYNTHETASE, ANTI-CODON-BINDING DOMAIN-CONTAINING PROTEIN"/>
    <property type="match status" value="1"/>
</dbReference>
<dbReference type="Pfam" id="PF01386">
    <property type="entry name" value="Ribosomal_L25p"/>
    <property type="match status" value="1"/>
</dbReference>
<dbReference type="Pfam" id="PF14693">
    <property type="entry name" value="Ribosomal_TL5_C"/>
    <property type="match status" value="1"/>
</dbReference>
<dbReference type="SUPFAM" id="SSF50715">
    <property type="entry name" value="Ribosomal protein L25-like"/>
    <property type="match status" value="1"/>
</dbReference>
<comment type="function">
    <text evidence="1">This is one of the proteins that binds to the 5S RNA in the ribosome where it forms part of the central protuberance.</text>
</comment>
<comment type="subunit">
    <text evidence="1">Part of the 50S ribosomal subunit; part of the 5S rRNA/L5/L18/L25 subcomplex. Contacts the 5S rRNA. Binds to the 5S rRNA independently of L5 and L18.</text>
</comment>
<comment type="similarity">
    <text evidence="1">Belongs to the bacterial ribosomal protein bL25 family. CTC subfamily.</text>
</comment>
<sequence length="203" mass="22729">MSEILELEAKSRTEFGTGAARALRREGRVPAIIYGAGKIPISISLEEKEITKYYRRPAFISQLINLTIDKKQYKVLPKAVELHPVTDIVRHVDFVFLEAKTQKMEVPVVYEGKERALGVKRGGYFNIIKRRVILLCDINNIPRNVTIDVTNMPIGTSLKSSEVKLPIGCSFVTKKEFVLATIIGRKGVKTEIEGEQQVAGAMQ</sequence>
<feature type="chain" id="PRO_0000181589" description="Large ribosomal subunit protein bL25">
    <location>
        <begin position="1"/>
        <end position="203"/>
    </location>
</feature>
<reference key="1">
    <citation type="journal article" date="2004" name="J. Bacteriol.">
        <title>Complete genome sequence of Rickettsia typhi and comparison with sequences of other Rickettsiae.</title>
        <authorList>
            <person name="McLeod M.P."/>
            <person name="Qin X."/>
            <person name="Karpathy S.E."/>
            <person name="Gioia J."/>
            <person name="Highlander S.K."/>
            <person name="Fox G.E."/>
            <person name="McNeill T.Z."/>
            <person name="Jiang H."/>
            <person name="Muzny D."/>
            <person name="Jacob L.S."/>
            <person name="Hawes A.C."/>
            <person name="Sodergren E."/>
            <person name="Gill R."/>
            <person name="Hume J."/>
            <person name="Morgan M."/>
            <person name="Fan G."/>
            <person name="Amin A.G."/>
            <person name="Gibbs R.A."/>
            <person name="Hong C."/>
            <person name="Yu X.-J."/>
            <person name="Walker D.H."/>
            <person name="Weinstock G.M."/>
        </authorList>
    </citation>
    <scope>NUCLEOTIDE SEQUENCE [LARGE SCALE GENOMIC DNA]</scope>
    <source>
        <strain>ATCC VR-144 / Wilmington</strain>
    </source>
</reference>
<keyword id="KW-0687">Ribonucleoprotein</keyword>
<keyword id="KW-0689">Ribosomal protein</keyword>
<keyword id="KW-0694">RNA-binding</keyword>
<keyword id="KW-0699">rRNA-binding</keyword>